<sequence>MADDMVYQEAVAAEVIQINGRTGVTGEIFQVRCKILGGKDTGRILTRNVKGPVKLGDFIMLRETEREAKQLGKRRK</sequence>
<comment type="similarity">
    <text evidence="1">Belongs to the eukaryotic ribosomal protein eS28 family.</text>
</comment>
<evidence type="ECO:0000255" key="1">
    <source>
        <dbReference type="HAMAP-Rule" id="MF_00292"/>
    </source>
</evidence>
<evidence type="ECO:0000305" key="2"/>
<protein>
    <recommendedName>
        <fullName evidence="1">Small ribosomal subunit protein eS28</fullName>
    </recommendedName>
    <alternativeName>
        <fullName evidence="2">30S ribosomal protein S28e</fullName>
    </alternativeName>
</protein>
<feature type="chain" id="PRO_1000115084" description="Small ribosomal subunit protein eS28">
    <location>
        <begin position="1"/>
        <end position="76"/>
    </location>
</feature>
<reference key="1">
    <citation type="submission" date="2007-10" db="EMBL/GenBank/DDBJ databases">
        <title>Complete sequence of Methanococcus maripaludis C6.</title>
        <authorList>
            <consortium name="US DOE Joint Genome Institute"/>
            <person name="Copeland A."/>
            <person name="Lucas S."/>
            <person name="Lapidus A."/>
            <person name="Barry K."/>
            <person name="Glavina del Rio T."/>
            <person name="Dalin E."/>
            <person name="Tice H."/>
            <person name="Pitluck S."/>
            <person name="Clum A."/>
            <person name="Schmutz J."/>
            <person name="Larimer F."/>
            <person name="Land M."/>
            <person name="Hauser L."/>
            <person name="Kyrpides N."/>
            <person name="Mikhailova N."/>
            <person name="Sieprawska-Lupa M."/>
            <person name="Whitman W.B."/>
            <person name="Richardson P."/>
        </authorList>
    </citation>
    <scope>NUCLEOTIDE SEQUENCE [LARGE SCALE GENOMIC DNA]</scope>
    <source>
        <strain>C6 / ATCC BAA-1332</strain>
    </source>
</reference>
<accession>A9A7E6</accession>
<keyword id="KW-0687">Ribonucleoprotein</keyword>
<keyword id="KW-0689">Ribosomal protein</keyword>
<gene>
    <name evidence="1" type="primary">rps28e</name>
    <name type="ordered locus">MmarC6_0249</name>
</gene>
<name>RS28_METM6</name>
<proteinExistence type="inferred from homology"/>
<dbReference type="EMBL" id="CP000867">
    <property type="protein sequence ID" value="ABX01070.1"/>
    <property type="molecule type" value="Genomic_DNA"/>
</dbReference>
<dbReference type="SMR" id="A9A7E6"/>
<dbReference type="STRING" id="444158.MmarC6_0249"/>
<dbReference type="KEGG" id="mmx:MmarC6_0249"/>
<dbReference type="eggNOG" id="arCOG04314">
    <property type="taxonomic scope" value="Archaea"/>
</dbReference>
<dbReference type="HOGENOM" id="CLU_178987_2_1_2"/>
<dbReference type="OrthoDB" id="7620at2157"/>
<dbReference type="PhylomeDB" id="A9A7E6"/>
<dbReference type="GO" id="GO:0022627">
    <property type="term" value="C:cytosolic small ribosomal subunit"/>
    <property type="evidence" value="ECO:0007669"/>
    <property type="project" value="TreeGrafter"/>
</dbReference>
<dbReference type="GO" id="GO:0003735">
    <property type="term" value="F:structural constituent of ribosome"/>
    <property type="evidence" value="ECO:0007669"/>
    <property type="project" value="InterPro"/>
</dbReference>
<dbReference type="GO" id="GO:0030490">
    <property type="term" value="P:maturation of SSU-rRNA"/>
    <property type="evidence" value="ECO:0007669"/>
    <property type="project" value="TreeGrafter"/>
</dbReference>
<dbReference type="GO" id="GO:0000028">
    <property type="term" value="P:ribosomal small subunit assembly"/>
    <property type="evidence" value="ECO:0007669"/>
    <property type="project" value="TreeGrafter"/>
</dbReference>
<dbReference type="GO" id="GO:0006412">
    <property type="term" value="P:translation"/>
    <property type="evidence" value="ECO:0007669"/>
    <property type="project" value="UniProtKB-UniRule"/>
</dbReference>
<dbReference type="CDD" id="cd04457">
    <property type="entry name" value="S1_S28E"/>
    <property type="match status" value="1"/>
</dbReference>
<dbReference type="FunFam" id="2.40.50.140:FF:000145">
    <property type="entry name" value="30S ribosomal protein S28e"/>
    <property type="match status" value="1"/>
</dbReference>
<dbReference type="Gene3D" id="2.40.50.140">
    <property type="entry name" value="Nucleic acid-binding proteins"/>
    <property type="match status" value="1"/>
</dbReference>
<dbReference type="HAMAP" id="MF_00292">
    <property type="entry name" value="Ribosomal_eS28"/>
    <property type="match status" value="1"/>
</dbReference>
<dbReference type="InterPro" id="IPR012340">
    <property type="entry name" value="NA-bd_OB-fold"/>
</dbReference>
<dbReference type="InterPro" id="IPR000289">
    <property type="entry name" value="Ribosomal_eS28"/>
</dbReference>
<dbReference type="InterPro" id="IPR028626">
    <property type="entry name" value="Ribosomal_eS28_CS"/>
</dbReference>
<dbReference type="NCBIfam" id="NF003080">
    <property type="entry name" value="PRK04007.1"/>
    <property type="match status" value="1"/>
</dbReference>
<dbReference type="PANTHER" id="PTHR10769">
    <property type="entry name" value="40S RIBOSOMAL PROTEIN S28"/>
    <property type="match status" value="1"/>
</dbReference>
<dbReference type="PANTHER" id="PTHR10769:SF3">
    <property type="entry name" value="SMALL RIBOSOMAL SUBUNIT PROTEIN ES28"/>
    <property type="match status" value="1"/>
</dbReference>
<dbReference type="Pfam" id="PF01200">
    <property type="entry name" value="Ribosomal_S28e"/>
    <property type="match status" value="1"/>
</dbReference>
<dbReference type="SUPFAM" id="SSF50249">
    <property type="entry name" value="Nucleic acid-binding proteins"/>
    <property type="match status" value="1"/>
</dbReference>
<dbReference type="PROSITE" id="PS00961">
    <property type="entry name" value="RIBOSOMAL_S28E"/>
    <property type="match status" value="1"/>
</dbReference>
<organism>
    <name type="scientific">Methanococcus maripaludis (strain C6 / ATCC BAA-1332)</name>
    <dbReference type="NCBI Taxonomy" id="444158"/>
    <lineage>
        <taxon>Archaea</taxon>
        <taxon>Methanobacteriati</taxon>
        <taxon>Methanobacteriota</taxon>
        <taxon>Methanomada group</taxon>
        <taxon>Methanococci</taxon>
        <taxon>Methanococcales</taxon>
        <taxon>Methanococcaceae</taxon>
        <taxon>Methanococcus</taxon>
    </lineage>
</organism>